<accession>P24339</accession>
<feature type="chain" id="PRO_0000125370" description="Kinesin-like protein cut7">
    <location>
        <begin position="1"/>
        <end position="1085"/>
    </location>
</feature>
<feature type="domain" description="Kinesin motor" evidence="3">
    <location>
        <begin position="72"/>
        <end position="421"/>
    </location>
</feature>
<feature type="repeat">
    <location>
        <begin position="987"/>
        <end position="998"/>
    </location>
</feature>
<feature type="repeat">
    <location>
        <begin position="999"/>
        <end position="1010"/>
    </location>
</feature>
<feature type="region of interest" description="Disordered" evidence="4">
    <location>
        <begin position="1"/>
        <end position="70"/>
    </location>
</feature>
<feature type="region of interest" description="Disordered" evidence="4">
    <location>
        <begin position="1049"/>
        <end position="1085"/>
    </location>
</feature>
<feature type="coiled-coil region" evidence="2">
    <location>
        <begin position="436"/>
        <end position="604"/>
    </location>
</feature>
<feature type="coiled-coil region" evidence="2">
    <location>
        <begin position="715"/>
        <end position="740"/>
    </location>
</feature>
<feature type="coiled-coil region" evidence="2">
    <location>
        <begin position="897"/>
        <end position="955"/>
    </location>
</feature>
<feature type="compositionally biased region" description="Polar residues" evidence="4">
    <location>
        <begin position="24"/>
        <end position="37"/>
    </location>
</feature>
<feature type="compositionally biased region" description="Low complexity" evidence="4">
    <location>
        <begin position="1065"/>
        <end position="1078"/>
    </location>
</feature>
<feature type="binding site" evidence="3">
    <location>
        <begin position="159"/>
        <end position="166"/>
    </location>
    <ligand>
        <name>ATP</name>
        <dbReference type="ChEBI" id="CHEBI:30616"/>
    </ligand>
</feature>
<feature type="modified residue" description="Phosphothreonine; by CDC2" evidence="1">
    <location>
        <position position="1011"/>
    </location>
</feature>
<feature type="sequence conflict" description="In Ref. 1; CAA40738." evidence="5" ref="1">
    <original>SASNPRKRREPPTIDTGYPDRSDTNSPT</original>
    <variation>LRAILGNDVSLLLLTL</variation>
    <location>
        <begin position="34"/>
        <end position="61"/>
    </location>
</feature>
<organism>
    <name type="scientific">Schizosaccharomyces pombe (strain 972 / ATCC 24843)</name>
    <name type="common">Fission yeast</name>
    <dbReference type="NCBI Taxonomy" id="284812"/>
    <lineage>
        <taxon>Eukaryota</taxon>
        <taxon>Fungi</taxon>
        <taxon>Dikarya</taxon>
        <taxon>Ascomycota</taxon>
        <taxon>Taphrinomycotina</taxon>
        <taxon>Schizosaccharomycetes</taxon>
        <taxon>Schizosaccharomycetales</taxon>
        <taxon>Schizosaccharomycetaceae</taxon>
        <taxon>Schizosaccharomyces</taxon>
    </lineage>
</organism>
<reference key="1">
    <citation type="journal article" date="1990" name="Nature">
        <title>Novel potential mitotic motor protein encoded by the fission yeast cut7+ gene.</title>
        <authorList>
            <person name="Hagan I."/>
            <person name="Yanagida M."/>
        </authorList>
    </citation>
    <scope>NUCLEOTIDE SEQUENCE [GENOMIC DNA]</scope>
</reference>
<reference key="2">
    <citation type="journal article" date="2002" name="Nature">
        <title>The genome sequence of Schizosaccharomyces pombe.</title>
        <authorList>
            <person name="Wood V."/>
            <person name="Gwilliam R."/>
            <person name="Rajandream M.A."/>
            <person name="Lyne M.H."/>
            <person name="Lyne R."/>
            <person name="Stewart A."/>
            <person name="Sgouros J.G."/>
            <person name="Peat N."/>
            <person name="Hayles J."/>
            <person name="Baker S.G."/>
            <person name="Basham D."/>
            <person name="Bowman S."/>
            <person name="Brooks K."/>
            <person name="Brown D."/>
            <person name="Brown S."/>
            <person name="Chillingworth T."/>
            <person name="Churcher C.M."/>
            <person name="Collins M."/>
            <person name="Connor R."/>
            <person name="Cronin A."/>
            <person name="Davis P."/>
            <person name="Feltwell T."/>
            <person name="Fraser A."/>
            <person name="Gentles S."/>
            <person name="Goble A."/>
            <person name="Hamlin N."/>
            <person name="Harris D.E."/>
            <person name="Hidalgo J."/>
            <person name="Hodgson G."/>
            <person name="Holroyd S."/>
            <person name="Hornsby T."/>
            <person name="Howarth S."/>
            <person name="Huckle E.J."/>
            <person name="Hunt S."/>
            <person name="Jagels K."/>
            <person name="James K.D."/>
            <person name="Jones L."/>
            <person name="Jones M."/>
            <person name="Leather S."/>
            <person name="McDonald S."/>
            <person name="McLean J."/>
            <person name="Mooney P."/>
            <person name="Moule S."/>
            <person name="Mungall K.L."/>
            <person name="Murphy L.D."/>
            <person name="Niblett D."/>
            <person name="Odell C."/>
            <person name="Oliver K."/>
            <person name="O'Neil S."/>
            <person name="Pearson D."/>
            <person name="Quail M.A."/>
            <person name="Rabbinowitsch E."/>
            <person name="Rutherford K.M."/>
            <person name="Rutter S."/>
            <person name="Saunders D."/>
            <person name="Seeger K."/>
            <person name="Sharp S."/>
            <person name="Skelton J."/>
            <person name="Simmonds M.N."/>
            <person name="Squares R."/>
            <person name="Squares S."/>
            <person name="Stevens K."/>
            <person name="Taylor K."/>
            <person name="Taylor R.G."/>
            <person name="Tivey A."/>
            <person name="Walsh S.V."/>
            <person name="Warren T."/>
            <person name="Whitehead S."/>
            <person name="Woodward J.R."/>
            <person name="Volckaert G."/>
            <person name="Aert R."/>
            <person name="Robben J."/>
            <person name="Grymonprez B."/>
            <person name="Weltjens I."/>
            <person name="Vanstreels E."/>
            <person name="Rieger M."/>
            <person name="Schaefer M."/>
            <person name="Mueller-Auer S."/>
            <person name="Gabel C."/>
            <person name="Fuchs M."/>
            <person name="Duesterhoeft A."/>
            <person name="Fritzc C."/>
            <person name="Holzer E."/>
            <person name="Moestl D."/>
            <person name="Hilbert H."/>
            <person name="Borzym K."/>
            <person name="Langer I."/>
            <person name="Beck A."/>
            <person name="Lehrach H."/>
            <person name="Reinhardt R."/>
            <person name="Pohl T.M."/>
            <person name="Eger P."/>
            <person name="Zimmermann W."/>
            <person name="Wedler H."/>
            <person name="Wambutt R."/>
            <person name="Purnelle B."/>
            <person name="Goffeau A."/>
            <person name="Cadieu E."/>
            <person name="Dreano S."/>
            <person name="Gloux S."/>
            <person name="Lelaure V."/>
            <person name="Mottier S."/>
            <person name="Galibert F."/>
            <person name="Aves S.J."/>
            <person name="Xiang Z."/>
            <person name="Hunt C."/>
            <person name="Moore K."/>
            <person name="Hurst S.M."/>
            <person name="Lucas M."/>
            <person name="Rochet M."/>
            <person name="Gaillardin C."/>
            <person name="Tallada V.A."/>
            <person name="Garzon A."/>
            <person name="Thode G."/>
            <person name="Daga R.R."/>
            <person name="Cruzado L."/>
            <person name="Jimenez J."/>
            <person name="Sanchez M."/>
            <person name="del Rey F."/>
            <person name="Benito J."/>
            <person name="Dominguez A."/>
            <person name="Revuelta J.L."/>
            <person name="Moreno S."/>
            <person name="Armstrong J."/>
            <person name="Forsburg S.L."/>
            <person name="Cerutti L."/>
            <person name="Lowe T."/>
            <person name="McCombie W.R."/>
            <person name="Paulsen I."/>
            <person name="Potashkin J."/>
            <person name="Shpakovski G.V."/>
            <person name="Ussery D."/>
            <person name="Barrell B.G."/>
            <person name="Nurse P."/>
        </authorList>
    </citation>
    <scope>NUCLEOTIDE SEQUENCE [LARGE SCALE GENOMIC DNA]</scope>
    <source>
        <strain>972 / ATCC 24843</strain>
    </source>
</reference>
<proteinExistence type="evidence at protein level"/>
<sequence>MAPRVAPGGSQQFLGKQGLKAKNPVSTPNSHFRSASNPRKRREPPTIDTGYPDRSDTNSPTDHALHDENETNINVVVRVRGRTDQEVRDNSSLAVSTSGAMGAELAIQSDPSSMLVTKTYAFDKVFGPEADQLMLFENSVAPMLEQVLNGYNCTIFAYGQTGTGKTYTMSGDLSDSDGILSEGAGLIPRALYQLFSSLDNSNQEYAVKCSYYELYNEEIRDLLVSEELRKPARVFEDTSRRGNVVITGIEESYIKNAGDGLRLLREGSHRRQVAATKCNDLSSRSHSIFTITLHRKVSSGMTDETNSLTINNNSDDLLRASKLHMVDLAGSENIGRSGAENKRARETGMINQSLLTLGRVINALVEKAHHIPYRESKLTRLLQDSLGGKTKTSMIVTVSSTNTNLEETISTLEYAARAKSIRNKPQNNQLVFRKVLIKDLVLDIERLKNDLNATRKKNGVYLAESTYKELMDRVQNKDLLCQEQARKLEVLDLNVKSSREQLQYVSKSNQEHKKEVEALQLQLVNSSTELESVKSENEKLKNELVLEIEKRKKYETNEAKITTVATDLSQYYRESKEYIASLYEKLDRTERNNKENENNFWNLKFNLLTMLRSFHGSFTDETNGYFTLLNDFNASMEELLNTHSNQLLISMTKITEHFQSLDEALQSARSSCAVPNSSLDLIVSELKDSKNSLLDALEHSLQDISMSSQKLGNGISSELIELQKDMKESYRQLVQELRSLYNLQHTHEESQKELMYGVRNDIDALVKTCTTSLNDADIILSDYISDQKSKFESKQQDLIANIGKIVSNFLQEQNESLYTKADILHSHLNDTNSNIRKANEIMNNRSEEFLRNAASQAEIVGANKERIQKTVENGSQLLDSKSKAIHSNSRSMYDHCLALAESQKQGVNLEVQTLDRLLQKVKEHSEDNTKEKHQQLLDLLESLVGNNDNLIDSIKTPHTELQKITDHVLKGTTSLANHTNELLGLGDESLCNLETTIEDTSLVKLETTGDTPSKRELPATPSWTRDSSLIKETTNLNLDSDKKFVRETYTSSNQTNEPDVYDKPSNSSRTSLLRSSRSAYSKMKR</sequence>
<gene>
    <name type="primary">cut7</name>
    <name type="ORF">SPAC25G10.07c</name>
</gene>
<evidence type="ECO:0000250" key="1"/>
<evidence type="ECO:0000255" key="2"/>
<evidence type="ECO:0000255" key="3">
    <source>
        <dbReference type="PROSITE-ProRule" id="PRU00283"/>
    </source>
</evidence>
<evidence type="ECO:0000256" key="4">
    <source>
        <dbReference type="SAM" id="MobiDB-lite"/>
    </source>
</evidence>
<evidence type="ECO:0000305" key="5"/>
<keyword id="KW-0002">3D-structure</keyword>
<keyword id="KW-0067">ATP-binding</keyword>
<keyword id="KW-0131">Cell cycle</keyword>
<keyword id="KW-0132">Cell division</keyword>
<keyword id="KW-0175">Coiled coil</keyword>
<keyword id="KW-0963">Cytoplasm</keyword>
<keyword id="KW-0206">Cytoskeleton</keyword>
<keyword id="KW-0493">Microtubule</keyword>
<keyword id="KW-0498">Mitosis</keyword>
<keyword id="KW-0505">Motor protein</keyword>
<keyword id="KW-0547">Nucleotide-binding</keyword>
<keyword id="KW-0597">Phosphoprotein</keyword>
<keyword id="KW-1185">Reference proteome</keyword>
<keyword id="KW-0677">Repeat</keyword>
<dbReference type="EMBL" id="X57513">
    <property type="protein sequence ID" value="CAA40738.1"/>
    <property type="molecule type" value="Genomic_DNA"/>
</dbReference>
<dbReference type="EMBL" id="CU329670">
    <property type="protein sequence ID" value="CAA94636.1"/>
    <property type="molecule type" value="Genomic_DNA"/>
</dbReference>
<dbReference type="PIR" id="S14032">
    <property type="entry name" value="S14032"/>
</dbReference>
<dbReference type="PIR" id="T38378">
    <property type="entry name" value="T38378"/>
</dbReference>
<dbReference type="RefSeq" id="NP_594527.1">
    <property type="nucleotide sequence ID" value="NM_001019956.2"/>
</dbReference>
<dbReference type="PDB" id="5M5I">
    <property type="method" value="EM"/>
    <property type="resolution" value="9.30 A"/>
    <property type="chains" value="C=64-432"/>
</dbReference>
<dbReference type="PDB" id="5M5L">
    <property type="method" value="EM"/>
    <property type="resolution" value="9.30 A"/>
    <property type="chains" value="C=64-432"/>
</dbReference>
<dbReference type="PDB" id="5M5M">
    <property type="method" value="EM"/>
    <property type="resolution" value="9.30 A"/>
    <property type="chains" value="C=64-432"/>
</dbReference>
<dbReference type="PDB" id="5M5N">
    <property type="method" value="EM"/>
    <property type="resolution" value="9.30 A"/>
    <property type="chains" value="C=64-432"/>
</dbReference>
<dbReference type="PDB" id="5M5O">
    <property type="method" value="EM"/>
    <property type="resolution" value="9.30 A"/>
    <property type="chains" value="C=64-432"/>
</dbReference>
<dbReference type="PDB" id="6S8M">
    <property type="method" value="EM"/>
    <property type="resolution" value="4.50 A"/>
    <property type="chains" value="K=1-432"/>
</dbReference>
<dbReference type="PDBsum" id="5M5I"/>
<dbReference type="PDBsum" id="5M5L"/>
<dbReference type="PDBsum" id="5M5M"/>
<dbReference type="PDBsum" id="5M5N"/>
<dbReference type="PDBsum" id="5M5O"/>
<dbReference type="PDBsum" id="6S8M"/>
<dbReference type="EMDB" id="EMD-3445"/>
<dbReference type="EMDB" id="EMD-3527"/>
<dbReference type="SMR" id="P24339"/>
<dbReference type="BioGRID" id="279182">
    <property type="interactions" value="48"/>
</dbReference>
<dbReference type="DIP" id="DIP-61701N"/>
<dbReference type="FunCoup" id="P24339">
    <property type="interactions" value="666"/>
</dbReference>
<dbReference type="IntAct" id="P24339">
    <property type="interactions" value="1"/>
</dbReference>
<dbReference type="STRING" id="284812.P24339"/>
<dbReference type="iPTMnet" id="P24339"/>
<dbReference type="PaxDb" id="4896-SPAC25G10.07c.1"/>
<dbReference type="EnsemblFungi" id="SPAC25G10.07c.1">
    <property type="protein sequence ID" value="SPAC25G10.07c.1:pep"/>
    <property type="gene ID" value="SPAC25G10.07c"/>
</dbReference>
<dbReference type="GeneID" id="2542732"/>
<dbReference type="KEGG" id="spo:2542732"/>
<dbReference type="PomBase" id="SPAC25G10.07c">
    <property type="gene designation" value="cut7"/>
</dbReference>
<dbReference type="VEuPathDB" id="FungiDB:SPAC25G10.07c"/>
<dbReference type="eggNOG" id="KOG0243">
    <property type="taxonomic scope" value="Eukaryota"/>
</dbReference>
<dbReference type="HOGENOM" id="CLU_001485_33_2_1"/>
<dbReference type="InParanoid" id="P24339"/>
<dbReference type="OMA" id="DWETFDQ"/>
<dbReference type="PhylomeDB" id="P24339"/>
<dbReference type="Reactome" id="R-SPO-983189">
    <property type="pathway name" value="Kinesins"/>
</dbReference>
<dbReference type="CD-CODE" id="576F0A76">
    <property type="entry name" value="Centrosome"/>
</dbReference>
<dbReference type="PRO" id="PR:P24339"/>
<dbReference type="Proteomes" id="UP000002485">
    <property type="component" value="Chromosome I"/>
</dbReference>
<dbReference type="GO" id="GO:0005737">
    <property type="term" value="C:cytoplasm"/>
    <property type="evidence" value="ECO:0007669"/>
    <property type="project" value="UniProtKB-KW"/>
</dbReference>
<dbReference type="GO" id="GO:0000776">
    <property type="term" value="C:kinetochore"/>
    <property type="evidence" value="ECO:0000314"/>
    <property type="project" value="PomBase"/>
</dbReference>
<dbReference type="GO" id="GO:0072687">
    <property type="term" value="C:meiotic spindle"/>
    <property type="evidence" value="ECO:0000314"/>
    <property type="project" value="PomBase"/>
</dbReference>
<dbReference type="GO" id="GO:0090619">
    <property type="term" value="C:meiotic spindle pole"/>
    <property type="evidence" value="ECO:0000314"/>
    <property type="project" value="PomBase"/>
</dbReference>
<dbReference type="GO" id="GO:0005875">
    <property type="term" value="C:microtubule associated complex"/>
    <property type="evidence" value="ECO:0000305"/>
    <property type="project" value="PomBase"/>
</dbReference>
<dbReference type="GO" id="GO:0015630">
    <property type="term" value="C:microtubule cytoskeleton"/>
    <property type="evidence" value="ECO:0007005"/>
    <property type="project" value="PomBase"/>
</dbReference>
<dbReference type="GO" id="GO:0072686">
    <property type="term" value="C:mitotic spindle"/>
    <property type="evidence" value="ECO:0000318"/>
    <property type="project" value="GO_Central"/>
</dbReference>
<dbReference type="GO" id="GO:1990023">
    <property type="term" value="C:mitotic spindle midzone"/>
    <property type="evidence" value="ECO:0000314"/>
    <property type="project" value="PomBase"/>
</dbReference>
<dbReference type="GO" id="GO:0044732">
    <property type="term" value="C:mitotic spindle pole body"/>
    <property type="evidence" value="ECO:0000314"/>
    <property type="project" value="PomBase"/>
</dbReference>
<dbReference type="GO" id="GO:0005634">
    <property type="term" value="C:nucleus"/>
    <property type="evidence" value="ECO:0007005"/>
    <property type="project" value="PomBase"/>
</dbReference>
<dbReference type="GO" id="GO:0005827">
    <property type="term" value="C:polar microtubule"/>
    <property type="evidence" value="ECO:0000314"/>
    <property type="project" value="PomBase"/>
</dbReference>
<dbReference type="GO" id="GO:0005876">
    <property type="term" value="C:spindle microtubule"/>
    <property type="evidence" value="ECO:0000318"/>
    <property type="project" value="GO_Central"/>
</dbReference>
<dbReference type="GO" id="GO:0005524">
    <property type="term" value="F:ATP binding"/>
    <property type="evidence" value="ECO:0007669"/>
    <property type="project" value="UniProtKB-KW"/>
</dbReference>
<dbReference type="GO" id="GO:0016887">
    <property type="term" value="F:ATP hydrolysis activity"/>
    <property type="evidence" value="ECO:0000305"/>
    <property type="project" value="PomBase"/>
</dbReference>
<dbReference type="GO" id="GO:0008017">
    <property type="term" value="F:microtubule binding"/>
    <property type="evidence" value="ECO:0000314"/>
    <property type="project" value="PomBase"/>
</dbReference>
<dbReference type="GO" id="GO:0003777">
    <property type="term" value="F:microtubule motor activity"/>
    <property type="evidence" value="ECO:0000314"/>
    <property type="project" value="PomBase"/>
</dbReference>
<dbReference type="GO" id="GO:0008569">
    <property type="term" value="F:minus-end-directed microtubule motor activity"/>
    <property type="evidence" value="ECO:0000314"/>
    <property type="project" value="PomBase"/>
</dbReference>
<dbReference type="GO" id="GO:0008574">
    <property type="term" value="F:plus-end-directed microtubule motor activity"/>
    <property type="evidence" value="ECO:0000314"/>
    <property type="project" value="CACAO"/>
</dbReference>
<dbReference type="GO" id="GO:0051301">
    <property type="term" value="P:cell division"/>
    <property type="evidence" value="ECO:0007669"/>
    <property type="project" value="UniProtKB-KW"/>
</dbReference>
<dbReference type="GO" id="GO:0000073">
    <property type="term" value="P:initial mitotic spindle pole body separation"/>
    <property type="evidence" value="ECO:0000269"/>
    <property type="project" value="PomBase"/>
</dbReference>
<dbReference type="GO" id="GO:0090306">
    <property type="term" value="P:meiotic spindle assembly"/>
    <property type="evidence" value="ECO:0000315"/>
    <property type="project" value="PomBase"/>
</dbReference>
<dbReference type="GO" id="GO:0099606">
    <property type="term" value="P:microtubule plus-end directed mitotic chromosome migration"/>
    <property type="evidence" value="ECO:0000316"/>
    <property type="project" value="PomBase"/>
</dbReference>
<dbReference type="GO" id="GO:0090307">
    <property type="term" value="P:mitotic spindle assembly"/>
    <property type="evidence" value="ECO:0000318"/>
    <property type="project" value="GO_Central"/>
</dbReference>
<dbReference type="GO" id="GO:0061805">
    <property type="term" value="P:mitotic spindle elongation (spindle phase three)"/>
    <property type="evidence" value="ECO:0000315"/>
    <property type="project" value="PomBase"/>
</dbReference>
<dbReference type="GO" id="GO:0061804">
    <property type="term" value="P:mitotic spindle formation (spindle phase one)"/>
    <property type="evidence" value="ECO:0000315"/>
    <property type="project" value="PomBase"/>
</dbReference>
<dbReference type="GO" id="GO:0051256">
    <property type="term" value="P:mitotic spindle midzone assembly"/>
    <property type="evidence" value="ECO:0000315"/>
    <property type="project" value="PomBase"/>
</dbReference>
<dbReference type="GO" id="GO:0051231">
    <property type="term" value="P:spindle elongation"/>
    <property type="evidence" value="ECO:0000318"/>
    <property type="project" value="GO_Central"/>
</dbReference>
<dbReference type="CDD" id="cd01364">
    <property type="entry name" value="KISc_BimC_Eg5"/>
    <property type="match status" value="1"/>
</dbReference>
<dbReference type="FunFam" id="3.40.850.10:FF:000051">
    <property type="entry name" value="Kinesin-like protein bimC"/>
    <property type="match status" value="1"/>
</dbReference>
<dbReference type="Gene3D" id="3.40.850.10">
    <property type="entry name" value="Kinesin motor domain"/>
    <property type="match status" value="1"/>
</dbReference>
<dbReference type="InterPro" id="IPR047149">
    <property type="entry name" value="KIF11-like"/>
</dbReference>
<dbReference type="InterPro" id="IPR047241">
    <property type="entry name" value="KIF11-like_kin_motor_dom"/>
</dbReference>
<dbReference type="InterPro" id="IPR019821">
    <property type="entry name" value="Kinesin_motor_CS"/>
</dbReference>
<dbReference type="InterPro" id="IPR001752">
    <property type="entry name" value="Kinesin_motor_dom"/>
</dbReference>
<dbReference type="InterPro" id="IPR036961">
    <property type="entry name" value="Kinesin_motor_dom_sf"/>
</dbReference>
<dbReference type="InterPro" id="IPR027417">
    <property type="entry name" value="P-loop_NTPase"/>
</dbReference>
<dbReference type="PANTHER" id="PTHR47970:SF12">
    <property type="entry name" value="KINESIN FAMILY MEMBER 11"/>
    <property type="match status" value="1"/>
</dbReference>
<dbReference type="PANTHER" id="PTHR47970">
    <property type="entry name" value="KINESIN-LIKE PROTEIN KIF11"/>
    <property type="match status" value="1"/>
</dbReference>
<dbReference type="Pfam" id="PF00225">
    <property type="entry name" value="Kinesin"/>
    <property type="match status" value="1"/>
</dbReference>
<dbReference type="PRINTS" id="PR00380">
    <property type="entry name" value="KINESINHEAVY"/>
</dbReference>
<dbReference type="SMART" id="SM00129">
    <property type="entry name" value="KISc"/>
    <property type="match status" value="1"/>
</dbReference>
<dbReference type="SUPFAM" id="SSF52540">
    <property type="entry name" value="P-loop containing nucleoside triphosphate hydrolases"/>
    <property type="match status" value="1"/>
</dbReference>
<dbReference type="PROSITE" id="PS00411">
    <property type="entry name" value="KINESIN_MOTOR_1"/>
    <property type="match status" value="1"/>
</dbReference>
<dbReference type="PROSITE" id="PS50067">
    <property type="entry name" value="KINESIN_MOTOR_2"/>
    <property type="match status" value="1"/>
</dbReference>
<name>CUT7_SCHPO</name>
<comment type="function">
    <text>Could be a spindle pole body motor. On transition from G2 to M phase of the cell cycle, the spindle pole body duplicates; the daughter pole bodies seed microtubules which interdigitate to form a short spindle that elongates to span the nucleus at metaphase. Mutations at cut7 block spindle formation.</text>
</comment>
<comment type="interaction">
    <interactant intactId="EBI-16168992">
        <id>P24339</id>
    </interactant>
    <interactant intactId="EBI-16079828">
        <id>P87169</id>
        <label>mad1</label>
    </interactant>
    <organismsDiffer>false</organismsDiffer>
    <experiments>3</experiments>
</comment>
<comment type="subcellular location">
    <subcellularLocation>
        <location>Cytoplasm</location>
        <location>Cytoskeleton</location>
        <location>Microtubule organizing center</location>
        <location>Spindle pole body</location>
    </subcellularLocation>
</comment>
<comment type="similarity">
    <text evidence="3">Belongs to the TRAFAC class myosin-kinesin ATPase superfamily. Kinesin family. BimC subfamily.</text>
</comment>
<protein>
    <recommendedName>
        <fullName>Kinesin-like protein cut7</fullName>
    </recommendedName>
    <alternativeName>
        <fullName>Cell untimely torn protein 7</fullName>
    </alternativeName>
</protein>